<organism>
    <name type="scientific">Radiation murine leukemia virus</name>
    <dbReference type="NCBI Taxonomy" id="11787"/>
    <lineage>
        <taxon>Viruses</taxon>
        <taxon>Riboviria</taxon>
        <taxon>Pararnavirae</taxon>
        <taxon>Artverviricota</taxon>
        <taxon>Revtraviricetes</taxon>
        <taxon>Ortervirales</taxon>
        <taxon>Retroviridae</taxon>
        <taxon>Orthoretrovirinae</taxon>
        <taxon>Gammaretrovirus</taxon>
        <taxon>Murine leukemia virus</taxon>
    </lineage>
</organism>
<reference key="1">
    <citation type="journal article" date="1987" name="Virology">
        <title>Nucleotide sequence of a radiation leukemia virus genome.</title>
        <authorList>
            <person name="Merregaert J."/>
            <person name="Janowski M."/>
            <person name="Reddy E.P."/>
        </authorList>
    </citation>
    <scope>NUCLEOTIDE SEQUENCE [GENOMIC RNA]</scope>
</reference>
<reference key="2">
    <citation type="journal article" date="1981" name="J. Biol. Chem.">
        <title>Primary structure of the low molecular weight nucleic acid-binding proteins of murine leukemia viruses.</title>
        <authorList>
            <person name="Henderson L.E."/>
            <person name="Copeland T.D."/>
            <person name="Sowder R.C."/>
            <person name="Smythers G.W."/>
            <person name="Oroszlan S."/>
        </authorList>
    </citation>
    <scope>PROTEIN SEQUENCE OF 478-505</scope>
</reference>
<accession>P11269</accession>
<keyword id="KW-0167">Capsid protein</keyword>
<keyword id="KW-0175">Coiled coil</keyword>
<keyword id="KW-0903">Direct protein sequencing</keyword>
<keyword id="KW-1032">Host cell membrane</keyword>
<keyword id="KW-1035">Host cytoplasm</keyword>
<keyword id="KW-1039">Host endosome</keyword>
<keyword id="KW-1043">Host membrane</keyword>
<keyword id="KW-0945">Host-virus interaction</keyword>
<keyword id="KW-0449">Lipoprotein</keyword>
<keyword id="KW-0472">Membrane</keyword>
<keyword id="KW-0479">Metal-binding</keyword>
<keyword id="KW-0519">Myristate</keyword>
<keyword id="KW-0597">Phosphoprotein</keyword>
<keyword id="KW-0694">RNA-binding</keyword>
<keyword id="KW-0832">Ubl conjugation</keyword>
<keyword id="KW-1198">Viral budding</keyword>
<keyword id="KW-1187">Viral budding via the host ESCRT complexes</keyword>
<keyword id="KW-0468">Viral matrix protein</keyword>
<keyword id="KW-0543">Viral nucleoprotein</keyword>
<keyword id="KW-1188">Viral release from host cell</keyword>
<keyword id="KW-0946">Virion</keyword>
<keyword id="KW-0862">Zinc</keyword>
<keyword id="KW-0863">Zinc-finger</keyword>
<comment type="function">
    <molecule>Gag polyprotein</molecule>
    <text evidence="2">Plays a role in budding and is processed by the viral protease during virion maturation outside the cell. During budding, it recruits, in a PPXY-dependent or independent manner, Nedd4-like ubiquitin ligases that conjugate ubiquitin molecules to Gag, or to Gag binding host factors. Interaction with HECT ubiquitin ligases probably links the viral protein to the host ESCRT pathway and facilitates release.</text>
</comment>
<comment type="function">
    <molecule>Matrix protein p15</molecule>
    <text evidence="2">Targets Gag and gag-pol polyproteins to the plasma membrane via a multipartite membrane binding signal, that includes its myristoylated N-terminus. Also mediates nuclear localization of the pre-integration complex.</text>
</comment>
<comment type="function">
    <molecule>RNA-binding phosphoprotein p12</molecule>
    <text evidence="2">Constituent of the pre-integration complex (PIC) which tethers the latter to mitotic chromosomes.</text>
</comment>
<comment type="function">
    <molecule>Capsid protein p30</molecule>
    <text evidence="3">Forms the spherical core of the virion that encapsulates the genomic RNA-nucleocapsid complex.</text>
</comment>
<comment type="function">
    <molecule>Nucleocapsid protein p10-Gag</molecule>
    <text evidence="2">Involved in the packaging and encapsidation of two copies of the genome. Binds with high affinity to conserved UCUG elements within the packaging signal, located near the 5'-end of the genome. This binding is dependent on genome dimerization.</text>
</comment>
<comment type="subunit">
    <molecule>Capsid protein p30</molecule>
    <text evidence="2 3">Homohexamer; further associates as homomultimer (By similarity). The virus core is composed of a lattice formed from hexagonal rings, each containing six capsid monomers. Interacts with mouse UBE2I and mouse PIAS4.</text>
</comment>
<comment type="subunit">
    <molecule>Gag polyprotein</molecule>
    <text evidence="2">Interacts (via PPXY motif) with host NEDD4. Interacts (via PSAP motif) with host TSG101. Interacts (via LYPX(n)L motif) with host PDCD6IP.</text>
</comment>
<comment type="subcellular location">
    <molecule>Gag polyprotein</molecule>
    <subcellularLocation>
        <location evidence="2">Virion</location>
    </subcellularLocation>
    <subcellularLocation>
        <location evidence="2">Host cell membrane</location>
        <topology evidence="2">Lipid-anchor</topology>
    </subcellularLocation>
    <subcellularLocation>
        <location evidence="4">Host endosome</location>
        <location evidence="4">Host multivesicular body</location>
    </subcellularLocation>
</comment>
<comment type="subcellular location">
    <molecule>Matrix protein p15</molecule>
    <subcellularLocation>
        <location evidence="2">Virion</location>
    </subcellularLocation>
</comment>
<comment type="subcellular location">
    <molecule>Capsid protein p30</molecule>
    <subcellularLocation>
        <location evidence="2">Virion</location>
    </subcellularLocation>
</comment>
<comment type="subcellular location">
    <molecule>Nucleocapsid protein p10-Gag</molecule>
    <subcellularLocation>
        <location evidence="2">Virion</location>
    </subcellularLocation>
</comment>
<comment type="subcellular location">
    <molecule>RNA-binding phosphoprotein p12</molecule>
    <subcellularLocation>
        <location evidence="2">Host cytoplasm</location>
    </subcellularLocation>
    <text evidence="2">Localizes to the host cytoplasm early in infection and binds to the mitotic chromosomes later on.</text>
</comment>
<comment type="domain">
    <molecule>Gag polyprotein</molecule>
    <text evidence="2">Late-budding domains (L domains) are short sequence motifs essential for viral particle budding. They recruit proteins of the host ESCRT machinery (Endosomal Sorting Complex Required for Transport) or ESCRT-associated proteins. RNA-binding phosphoprotein p12 contains one L domain: a PPXY motif which interacts with the WW domain 3 of NEDD4 E3 ubiquitin ligase. PPXY motif is essential for virus egress. Matrix protein p15 contains one L domain: a PTAP/PSAP motif, which interacts with the UEV domain of TSG101. The junction between the matrix protein p15 and RNA-binding phosphoprotein p12 also contains one L domain: a LYPX(n)L motif which interacts with PDCD6IP. Both PSAP and LYPX(n)L domains might play little to no role in budding and possibly drive residual virus release.</text>
</comment>
<comment type="PTM">
    <molecule>Gag polyprotein</molecule>
    <text evidence="2">Ubiquitinated by ITCH. Gag can recruit the ubiquitin ligase Itch in an L domain-independent manner to facilitate virus release via a mechanism that involves Gag ubiquitination.</text>
</comment>
<comment type="PTM">
    <molecule>Gag polyprotein</molecule>
    <text evidence="2">Specific enzymatic cleavages by the viral protease yield mature proteins. The protease is released by autocatalytic cleavage. The polyprotein is cleaved during and after budding, this process is termed maturation.</text>
</comment>
<comment type="PTM">
    <molecule>Capsid protein p30</molecule>
    <text evidence="2">Sumoylated; required for virus replication.</text>
</comment>
<comment type="PTM">
    <text evidence="2">RNA-binding phosphoprotein p12 is phosphorylated on serine residues.</text>
</comment>
<name>GAG_MLVRD</name>
<organismHost>
    <name type="scientific">Mus musculus</name>
    <name type="common">Mouse</name>
    <dbReference type="NCBI Taxonomy" id="10090"/>
</organismHost>
<gene>
    <name type="primary">gag</name>
</gene>
<proteinExistence type="evidence at protein level"/>
<feature type="initiator methionine" description="Removed; by host" evidence="5">
    <location>
        <position position="1"/>
    </location>
</feature>
<feature type="chain" id="PRO_0000390816" description="Gag polyprotein" evidence="1">
    <location>
        <begin position="2"/>
        <end position="537"/>
    </location>
</feature>
<feature type="chain" id="PRO_0000040916" description="Matrix protein p15">
    <location>
        <begin position="2"/>
        <end position="129"/>
    </location>
</feature>
<feature type="chain" id="PRO_0000040917" description="RNA-binding phosphoprotein p12">
    <location>
        <begin position="130"/>
        <end position="214"/>
    </location>
</feature>
<feature type="chain" id="PRO_0000040918" description="Capsid protein p30">
    <location>
        <begin position="215"/>
        <end position="477"/>
    </location>
</feature>
<feature type="chain" id="PRO_0000040919" description="Nucleocapsid protein p10-Gag">
    <location>
        <begin position="478"/>
        <end position="537"/>
    </location>
</feature>
<feature type="zinc finger region" description="CCHC-type" evidence="6">
    <location>
        <begin position="501"/>
        <end position="518"/>
    </location>
</feature>
<feature type="region of interest" description="Disordered" evidence="7">
    <location>
        <begin position="112"/>
        <end position="217"/>
    </location>
</feature>
<feature type="region of interest" description="Interaction with host PIAS4" evidence="2">
    <location>
        <begin position="344"/>
        <end position="392"/>
    </location>
</feature>
<feature type="region of interest" description="Interaction with host UBE2I" evidence="2">
    <location>
        <begin position="429"/>
        <end position="434"/>
    </location>
</feature>
<feature type="region of interest" description="Disordered" evidence="7">
    <location>
        <begin position="433"/>
        <end position="537"/>
    </location>
</feature>
<feature type="coiled-coil region" evidence="5">
    <location>
        <begin position="437"/>
        <end position="477"/>
    </location>
</feature>
<feature type="short sequence motif" description="PTAP/PSAP motif" evidence="2">
    <location>
        <begin position="109"/>
        <end position="112"/>
    </location>
</feature>
<feature type="short sequence motif" description="LYPX(n)L motif" evidence="2">
    <location>
        <begin position="128"/>
        <end position="132"/>
    </location>
</feature>
<feature type="short sequence motif" description="PPXY motif" evidence="2">
    <location>
        <begin position="161"/>
        <end position="164"/>
    </location>
</feature>
<feature type="compositionally biased region" description="Basic and acidic residues" evidence="7">
    <location>
        <begin position="433"/>
        <end position="474"/>
    </location>
</feature>
<feature type="compositionally biased region" description="Basic and acidic residues" evidence="7">
    <location>
        <begin position="485"/>
        <end position="518"/>
    </location>
</feature>
<feature type="site" description="Cleavage; by viral protease" evidence="2">
    <location>
        <begin position="129"/>
        <end position="130"/>
    </location>
</feature>
<feature type="site" description="Cleavage; by viral protease" evidence="2">
    <location>
        <begin position="214"/>
        <end position="215"/>
    </location>
</feature>
<feature type="site" description="Cleavage; by viral protease" evidence="2">
    <location>
        <begin position="477"/>
        <end position="478"/>
    </location>
</feature>
<feature type="modified residue" description="Phosphoserine; by host" evidence="2">
    <location>
        <position position="191"/>
    </location>
</feature>
<feature type="lipid moiety-binding region" description="N-myristoyl glycine; by host" evidence="5">
    <location>
        <position position="2"/>
    </location>
</feature>
<feature type="sequence conflict" description="In Ref. 2; AA sequence." evidence="8" ref="2">
    <original>T</original>
    <variation>S</variation>
    <location>
        <position position="479"/>
    </location>
</feature>
<feature type="sequence conflict" description="In Ref. 2; AA sequence." evidence="8" ref="2">
    <original>T</original>
    <variation>S</variation>
    <location>
        <position position="482"/>
    </location>
</feature>
<dbReference type="EMBL" id="K03363">
    <property type="protein sequence ID" value="AAA46518.1"/>
    <property type="molecule type" value="Genomic_RNA"/>
</dbReference>
<dbReference type="PIR" id="A26183">
    <property type="entry name" value="FOMVRV"/>
</dbReference>
<dbReference type="SMR" id="P11269"/>
<dbReference type="Proteomes" id="UP000007778">
    <property type="component" value="Genome"/>
</dbReference>
<dbReference type="GO" id="GO:0020002">
    <property type="term" value="C:host cell plasma membrane"/>
    <property type="evidence" value="ECO:0007669"/>
    <property type="project" value="UniProtKB-SubCell"/>
</dbReference>
<dbReference type="GO" id="GO:0072494">
    <property type="term" value="C:host multivesicular body"/>
    <property type="evidence" value="ECO:0007669"/>
    <property type="project" value="UniProtKB-SubCell"/>
</dbReference>
<dbReference type="GO" id="GO:0016020">
    <property type="term" value="C:membrane"/>
    <property type="evidence" value="ECO:0007669"/>
    <property type="project" value="UniProtKB-KW"/>
</dbReference>
<dbReference type="GO" id="GO:0019013">
    <property type="term" value="C:viral nucleocapsid"/>
    <property type="evidence" value="ECO:0007669"/>
    <property type="project" value="UniProtKB-KW"/>
</dbReference>
<dbReference type="GO" id="GO:0003723">
    <property type="term" value="F:RNA binding"/>
    <property type="evidence" value="ECO:0007669"/>
    <property type="project" value="UniProtKB-KW"/>
</dbReference>
<dbReference type="GO" id="GO:0039660">
    <property type="term" value="F:structural constituent of virion"/>
    <property type="evidence" value="ECO:0007669"/>
    <property type="project" value="UniProtKB-KW"/>
</dbReference>
<dbReference type="GO" id="GO:0008270">
    <property type="term" value="F:zinc ion binding"/>
    <property type="evidence" value="ECO:0007669"/>
    <property type="project" value="UniProtKB-KW"/>
</dbReference>
<dbReference type="GO" id="GO:0039702">
    <property type="term" value="P:viral budding via host ESCRT complex"/>
    <property type="evidence" value="ECO:0007669"/>
    <property type="project" value="UniProtKB-KW"/>
</dbReference>
<dbReference type="FunFam" id="1.10.375.10:FF:000008">
    <property type="entry name" value="Gag polyprotein"/>
    <property type="match status" value="1"/>
</dbReference>
<dbReference type="Gene3D" id="1.10.150.180">
    <property type="entry name" value="Gamma-retroviral matrix domain"/>
    <property type="match status" value="1"/>
</dbReference>
<dbReference type="Gene3D" id="1.10.375.10">
    <property type="entry name" value="Human Immunodeficiency Virus Type 1 Capsid Protein"/>
    <property type="match status" value="1"/>
</dbReference>
<dbReference type="Gene3D" id="4.10.60.10">
    <property type="entry name" value="Zinc finger, CCHC-type"/>
    <property type="match status" value="1"/>
</dbReference>
<dbReference type="InterPro" id="IPR000840">
    <property type="entry name" value="G_retro_matrix"/>
</dbReference>
<dbReference type="InterPro" id="IPR036946">
    <property type="entry name" value="G_retro_matrix_sf"/>
</dbReference>
<dbReference type="InterPro" id="IPR002079">
    <property type="entry name" value="Gag_p12"/>
</dbReference>
<dbReference type="InterPro" id="IPR003036">
    <property type="entry name" value="Gag_P30"/>
</dbReference>
<dbReference type="InterPro" id="IPR008919">
    <property type="entry name" value="Retrov_capsid_N"/>
</dbReference>
<dbReference type="InterPro" id="IPR050462">
    <property type="entry name" value="Retroviral_Gag-Pol_poly"/>
</dbReference>
<dbReference type="InterPro" id="IPR010999">
    <property type="entry name" value="Retrovr_matrix"/>
</dbReference>
<dbReference type="InterPro" id="IPR001878">
    <property type="entry name" value="Znf_CCHC"/>
</dbReference>
<dbReference type="InterPro" id="IPR036875">
    <property type="entry name" value="Znf_CCHC_sf"/>
</dbReference>
<dbReference type="PANTHER" id="PTHR33166">
    <property type="entry name" value="GAG_P30 DOMAIN-CONTAINING PROTEIN"/>
    <property type="match status" value="1"/>
</dbReference>
<dbReference type="Pfam" id="PF01140">
    <property type="entry name" value="Gag_MA"/>
    <property type="match status" value="1"/>
</dbReference>
<dbReference type="Pfam" id="PF01141">
    <property type="entry name" value="Gag_p12"/>
    <property type="match status" value="1"/>
</dbReference>
<dbReference type="Pfam" id="PF02093">
    <property type="entry name" value="Gag_p30"/>
    <property type="match status" value="1"/>
</dbReference>
<dbReference type="Pfam" id="PF00098">
    <property type="entry name" value="zf-CCHC"/>
    <property type="match status" value="1"/>
</dbReference>
<dbReference type="SMART" id="SM00343">
    <property type="entry name" value="ZnF_C2HC"/>
    <property type="match status" value="1"/>
</dbReference>
<dbReference type="SUPFAM" id="SSF47836">
    <property type="entry name" value="Retroviral matrix proteins"/>
    <property type="match status" value="1"/>
</dbReference>
<dbReference type="SUPFAM" id="SSF47943">
    <property type="entry name" value="Retrovirus capsid protein, N-terminal core domain"/>
    <property type="match status" value="1"/>
</dbReference>
<dbReference type="SUPFAM" id="SSF57756">
    <property type="entry name" value="Retrovirus zinc finger-like domains"/>
    <property type="match status" value="1"/>
</dbReference>
<dbReference type="PROSITE" id="PS50158">
    <property type="entry name" value="ZF_CCHC"/>
    <property type="match status" value="1"/>
</dbReference>
<evidence type="ECO:0000250" key="1"/>
<evidence type="ECO:0000250" key="2">
    <source>
        <dbReference type="UniProtKB" id="P03332"/>
    </source>
</evidence>
<evidence type="ECO:0000250" key="3">
    <source>
        <dbReference type="UniProtKB" id="P03336"/>
    </source>
</evidence>
<evidence type="ECO:0000250" key="4">
    <source>
        <dbReference type="UniProtKB" id="P26807"/>
    </source>
</evidence>
<evidence type="ECO:0000255" key="5"/>
<evidence type="ECO:0000255" key="6">
    <source>
        <dbReference type="PROSITE-ProRule" id="PRU00047"/>
    </source>
</evidence>
<evidence type="ECO:0000256" key="7">
    <source>
        <dbReference type="SAM" id="MobiDB-lite"/>
    </source>
</evidence>
<evidence type="ECO:0000305" key="8"/>
<protein>
    <recommendedName>
        <fullName>Gag polyprotein</fullName>
    </recommendedName>
    <alternativeName>
        <fullName>Core polyprotein</fullName>
    </alternativeName>
    <component>
        <recommendedName>
            <fullName>Matrix protein p15</fullName>
            <shortName>MA</shortName>
        </recommendedName>
    </component>
    <component>
        <recommendedName>
            <fullName>RNA-binding phosphoprotein p12</fullName>
        </recommendedName>
        <alternativeName>
            <fullName>pp12</fullName>
        </alternativeName>
    </component>
    <component>
        <recommendedName>
            <fullName>Capsid protein p30</fullName>
            <shortName>CA</shortName>
        </recommendedName>
    </component>
    <component>
        <recommendedName>
            <fullName>Nucleocapsid protein p10-Gag</fullName>
            <shortName>NC-gag</shortName>
        </recommendedName>
    </component>
</protein>
<sequence length="537" mass="60784">MGQTVTTPLSLTLEHWGDVQRIASNQSVEVKKRRRVTFCPAEWPTFDVGWPQDGTFNLDIILQVKSKVFSPGPHGHPDQVPYIVTWEAIAYEPPSWVKPFVSPKLSLSPTAPILPSGPSTQPPPRSALYPALTPSIKPRPSKPQVLSDNGGPLIDLLTEDPPPYGEQGPSSPDGDGDREEATYTSEIPAPSPMVSRLRGKRDPPAADSTTSRAFPLRLGGNGQLQYWPFSSSDLYNWKNNNPSFSEDPGKLTALIESVLTTHQPTWDDCQQLLGTLLTGEEKQRVLLEARKAVRGNDGRPTQLPNEVNSAFPLERPDWDYTTPEGRNHLVLYRQLLLAGLQNAGRSPTNLAKVKGITQGPNESPSAFLERLKEAYRRYTPYDPEDHGQETSVSMSFIWQSAPDIGRKLERLEDLKSKTLRDLVREAEKIFNKRETPEEREERFRRETEENEERRRAEDEQREKERDRRRQREMSKLLATVVTGQRQDRQGGERKRPQLDKDQCAYCKEKGHWAKDCPKKPRGPRGPRPQTSLLTLDD</sequence>